<reference key="1">
    <citation type="submission" date="2005-10" db="EMBL/GenBank/DDBJ databases">
        <title>Complete sequence of chromosome 1 of Burkholderia sp. 383.</title>
        <authorList>
            <consortium name="US DOE Joint Genome Institute"/>
            <person name="Copeland A."/>
            <person name="Lucas S."/>
            <person name="Lapidus A."/>
            <person name="Barry K."/>
            <person name="Detter J.C."/>
            <person name="Glavina T."/>
            <person name="Hammon N."/>
            <person name="Israni S."/>
            <person name="Pitluck S."/>
            <person name="Chain P."/>
            <person name="Malfatti S."/>
            <person name="Shin M."/>
            <person name="Vergez L."/>
            <person name="Schmutz J."/>
            <person name="Larimer F."/>
            <person name="Land M."/>
            <person name="Kyrpides N."/>
            <person name="Lykidis A."/>
            <person name="Richardson P."/>
        </authorList>
    </citation>
    <scope>NUCLEOTIDE SEQUENCE [LARGE SCALE GENOMIC DNA]</scope>
    <source>
        <strain>ATCC 17760 / DSM 23089 / LMG 22485 / NCIMB 9086 / R18194 / 383</strain>
    </source>
</reference>
<keyword id="KW-0560">Oxidoreductase</keyword>
<keyword id="KW-0819">tRNA processing</keyword>
<comment type="function">
    <text evidence="1">Catalyzes oxygen-dependent 5-hydroxyuridine (ho5U) modification at position 34 in tRNAs.</text>
</comment>
<comment type="catalytic activity">
    <reaction evidence="1">
        <text>uridine(34) in tRNA + AH2 + O2 = 5-hydroxyuridine(34) in tRNA + A + H2O</text>
        <dbReference type="Rhea" id="RHEA:64224"/>
        <dbReference type="Rhea" id="RHEA-COMP:11727"/>
        <dbReference type="Rhea" id="RHEA-COMP:13381"/>
        <dbReference type="ChEBI" id="CHEBI:13193"/>
        <dbReference type="ChEBI" id="CHEBI:15377"/>
        <dbReference type="ChEBI" id="CHEBI:15379"/>
        <dbReference type="ChEBI" id="CHEBI:17499"/>
        <dbReference type="ChEBI" id="CHEBI:65315"/>
        <dbReference type="ChEBI" id="CHEBI:136877"/>
    </reaction>
</comment>
<comment type="similarity">
    <text evidence="1">Belongs to the TrhO family.</text>
</comment>
<sequence length="284" mass="31555">MTIVNLAAYHFVSLDTNEQWRPLVTARCNELGLRGTILLAPEGINLFIAGTREAADAFIAYLRHDPLFEGKFATLQFKESLSDSQPFRRMLVRLKREIITMKKPAIKPELGRAPFVDAQTLKTWLDRGHDDTGRPVVMLDTRNAFEVDVGTFDDALDYRIDKFSEFPEVIDANRADLEGKTVVSFCTGGIRCEKAAIHMKEIGIENVYQLEGGILKYFEEVGGAHYHGDCFVFDYRTALNPQLQPTENVTCFACRAVVTPEAQQSPSFVPGQSCPACAPAASAA</sequence>
<proteinExistence type="inferred from homology"/>
<protein>
    <recommendedName>
        <fullName evidence="1">tRNA uridine(34) hydroxylase</fullName>
        <ecNumber evidence="1">1.14.-.-</ecNumber>
    </recommendedName>
    <alternativeName>
        <fullName evidence="1">tRNA hydroxylation protein O</fullName>
    </alternativeName>
</protein>
<organism>
    <name type="scientific">Burkholderia lata (strain ATCC 17760 / DSM 23089 / LMG 22485 / NCIMB 9086 / R18194 / 383)</name>
    <dbReference type="NCBI Taxonomy" id="482957"/>
    <lineage>
        <taxon>Bacteria</taxon>
        <taxon>Pseudomonadati</taxon>
        <taxon>Pseudomonadota</taxon>
        <taxon>Betaproteobacteria</taxon>
        <taxon>Burkholderiales</taxon>
        <taxon>Burkholderiaceae</taxon>
        <taxon>Burkholderia</taxon>
        <taxon>Burkholderia cepacia complex</taxon>
    </lineage>
</organism>
<accession>Q39E66</accession>
<evidence type="ECO:0000255" key="1">
    <source>
        <dbReference type="HAMAP-Rule" id="MF_00469"/>
    </source>
</evidence>
<feature type="chain" id="PRO_0000242914" description="tRNA uridine(34) hydroxylase">
    <location>
        <begin position="1"/>
        <end position="284"/>
    </location>
</feature>
<feature type="domain" description="Rhodanese" evidence="1">
    <location>
        <begin position="132"/>
        <end position="226"/>
    </location>
</feature>
<feature type="active site" description="Cysteine persulfide intermediate" evidence="1">
    <location>
        <position position="186"/>
    </location>
</feature>
<gene>
    <name evidence="1" type="primary">trhO</name>
    <name type="ordered locus">Bcep18194_A5656</name>
</gene>
<dbReference type="EC" id="1.14.-.-" evidence="1"/>
<dbReference type="EMBL" id="CP000151">
    <property type="protein sequence ID" value="ABB09250.1"/>
    <property type="molecule type" value="Genomic_DNA"/>
</dbReference>
<dbReference type="RefSeq" id="WP_011352776.1">
    <property type="nucleotide sequence ID" value="NC_007510.1"/>
</dbReference>
<dbReference type="SMR" id="Q39E66"/>
<dbReference type="GeneID" id="45095543"/>
<dbReference type="KEGG" id="bur:Bcep18194_A5656"/>
<dbReference type="PATRIC" id="fig|482957.22.peg.2628"/>
<dbReference type="HOGENOM" id="CLU_038878_0_1_4"/>
<dbReference type="Proteomes" id="UP000002705">
    <property type="component" value="Chromosome 1"/>
</dbReference>
<dbReference type="GO" id="GO:0016705">
    <property type="term" value="F:oxidoreductase activity, acting on paired donors, with incorporation or reduction of molecular oxygen"/>
    <property type="evidence" value="ECO:0007669"/>
    <property type="project" value="UniProtKB-UniRule"/>
</dbReference>
<dbReference type="GO" id="GO:0006400">
    <property type="term" value="P:tRNA modification"/>
    <property type="evidence" value="ECO:0007669"/>
    <property type="project" value="UniProtKB-UniRule"/>
</dbReference>
<dbReference type="CDD" id="cd01518">
    <property type="entry name" value="RHOD_YceA"/>
    <property type="match status" value="1"/>
</dbReference>
<dbReference type="Gene3D" id="3.30.70.100">
    <property type="match status" value="1"/>
</dbReference>
<dbReference type="Gene3D" id="3.40.250.10">
    <property type="entry name" value="Rhodanese-like domain"/>
    <property type="match status" value="1"/>
</dbReference>
<dbReference type="HAMAP" id="MF_00469">
    <property type="entry name" value="TrhO"/>
    <property type="match status" value="1"/>
</dbReference>
<dbReference type="InterPro" id="IPR001763">
    <property type="entry name" value="Rhodanese-like_dom"/>
</dbReference>
<dbReference type="InterPro" id="IPR036873">
    <property type="entry name" value="Rhodanese-like_dom_sf"/>
</dbReference>
<dbReference type="InterPro" id="IPR020936">
    <property type="entry name" value="TrhO"/>
</dbReference>
<dbReference type="InterPro" id="IPR040503">
    <property type="entry name" value="TRHO_N"/>
</dbReference>
<dbReference type="NCBIfam" id="NF003703">
    <property type="entry name" value="PRK05320.1"/>
    <property type="match status" value="1"/>
</dbReference>
<dbReference type="PANTHER" id="PTHR43268:SF3">
    <property type="entry name" value="RHODANESE-LIKE DOMAIN-CONTAINING PROTEIN 7-RELATED"/>
    <property type="match status" value="1"/>
</dbReference>
<dbReference type="PANTHER" id="PTHR43268">
    <property type="entry name" value="THIOSULFATE SULFURTRANSFERASE/RHODANESE-LIKE DOMAIN-CONTAINING PROTEIN 2"/>
    <property type="match status" value="1"/>
</dbReference>
<dbReference type="Pfam" id="PF00581">
    <property type="entry name" value="Rhodanese"/>
    <property type="match status" value="1"/>
</dbReference>
<dbReference type="Pfam" id="PF17773">
    <property type="entry name" value="UPF0176_N"/>
    <property type="match status" value="1"/>
</dbReference>
<dbReference type="SMART" id="SM00450">
    <property type="entry name" value="RHOD"/>
    <property type="match status" value="1"/>
</dbReference>
<dbReference type="SUPFAM" id="SSF52821">
    <property type="entry name" value="Rhodanese/Cell cycle control phosphatase"/>
    <property type="match status" value="1"/>
</dbReference>
<dbReference type="PROSITE" id="PS50206">
    <property type="entry name" value="RHODANESE_3"/>
    <property type="match status" value="1"/>
</dbReference>
<name>TRHO_BURL3</name>